<reference key="1">
    <citation type="journal article" date="2005" name="Science">
        <title>The genome of the basidiomycetous yeast and human pathogen Cryptococcus neoformans.</title>
        <authorList>
            <person name="Loftus B.J."/>
            <person name="Fung E."/>
            <person name="Roncaglia P."/>
            <person name="Rowley D."/>
            <person name="Amedeo P."/>
            <person name="Bruno D."/>
            <person name="Vamathevan J."/>
            <person name="Miranda M."/>
            <person name="Anderson I.J."/>
            <person name="Fraser J.A."/>
            <person name="Allen J.E."/>
            <person name="Bosdet I.E."/>
            <person name="Brent M.R."/>
            <person name="Chiu R."/>
            <person name="Doering T.L."/>
            <person name="Donlin M.J."/>
            <person name="D'Souza C.A."/>
            <person name="Fox D.S."/>
            <person name="Grinberg V."/>
            <person name="Fu J."/>
            <person name="Fukushima M."/>
            <person name="Haas B.J."/>
            <person name="Huang J.C."/>
            <person name="Janbon G."/>
            <person name="Jones S.J.M."/>
            <person name="Koo H.L."/>
            <person name="Krzywinski M.I."/>
            <person name="Kwon-Chung K.J."/>
            <person name="Lengeler K.B."/>
            <person name="Maiti R."/>
            <person name="Marra M.A."/>
            <person name="Marra R.E."/>
            <person name="Mathewson C.A."/>
            <person name="Mitchell T.G."/>
            <person name="Pertea M."/>
            <person name="Riggs F.R."/>
            <person name="Salzberg S.L."/>
            <person name="Schein J.E."/>
            <person name="Shvartsbeyn A."/>
            <person name="Shin H."/>
            <person name="Shumway M."/>
            <person name="Specht C.A."/>
            <person name="Suh B.B."/>
            <person name="Tenney A."/>
            <person name="Utterback T.R."/>
            <person name="Wickes B.L."/>
            <person name="Wortman J.R."/>
            <person name="Wye N.H."/>
            <person name="Kronstad J.W."/>
            <person name="Lodge J.K."/>
            <person name="Heitman J."/>
            <person name="Davis R.W."/>
            <person name="Fraser C.M."/>
            <person name="Hyman R.W."/>
        </authorList>
    </citation>
    <scope>NUCLEOTIDE SEQUENCE [LARGE SCALE GENOMIC DNA]</scope>
    <source>
        <strain>B-3501A</strain>
    </source>
</reference>
<feature type="chain" id="PRO_0000410320" description="DNA damage-inducible protein 1">
    <location>
        <begin position="1"/>
        <end position="434"/>
    </location>
</feature>
<feature type="domain" description="Ubiquitin-like">
    <location>
        <begin position="1"/>
        <end position="77"/>
    </location>
</feature>
<feature type="domain" description="UBA" evidence="4">
    <location>
        <begin position="395"/>
        <end position="434"/>
    </location>
</feature>
<feature type="region of interest" description="Disordered" evidence="5">
    <location>
        <begin position="315"/>
        <end position="396"/>
    </location>
</feature>
<feature type="compositionally biased region" description="Basic and acidic residues" evidence="5">
    <location>
        <begin position="315"/>
        <end position="325"/>
    </location>
</feature>
<feature type="compositionally biased region" description="Low complexity" evidence="5">
    <location>
        <begin position="368"/>
        <end position="388"/>
    </location>
</feature>
<feature type="active site" evidence="6">
    <location>
        <position position="212"/>
    </location>
</feature>
<protein>
    <recommendedName>
        <fullName>DNA damage-inducible protein 1</fullName>
        <ecNumber evidence="2">3.4.23.-</ecNumber>
    </recommendedName>
</protein>
<sequence>MRLTIIAPDSVHEHEVSPSLLIQDIINIVEATADLPPAVIVLTSDAGTPLTDPTRTLESYGLNGETATIFLTPTGPPVASSSSIPFPDADADIERMRLQALGNPSLMNDLRERDPETFAAIQGGTQSFKKALQLAQSRQRDAEFEKQRQIEALNADPYDIEAQKKIEEAIRMEAVLENMQHAMEYSPESFGNVTMLYINVEVNGHPVKAFVDSGAQTTIISPECAEQCGIMRLLDTRFAGMAEGVGTARILGRIHSAQIKLGSLYLPCAFSVLEGRSVDLLFGLDMLKRHQCCIDLSTNTLRINNTEVPFLSEHELPDKARRRGEAQVAGEMGDAAGQGVKAGVASPKIGKKTFPGEGHALGAGSSTGPGTATGSASATGARTGGTASVPSPSNRWKEDDIQTLVNLGAPRAQAIQLLEASGGNVDVAASMLFG</sequence>
<comment type="function">
    <text evidence="2 3">Probable aspartic protease. May be involved in the regulation of exocytosis. Acts as a linker between the 19S proteasome and polyubiquitinated proteins via UBA domain interactions with ubiquitin for their subsequent degradation. Required for S-phase checkpoint control.</text>
</comment>
<comment type="subunit">
    <text evidence="1">Binds ubiquitin and polyubiquitinated proteins.</text>
</comment>
<comment type="subcellular location">
    <subcellularLocation>
        <location evidence="1">Cytoplasm</location>
    </subcellularLocation>
</comment>
<comment type="similarity">
    <text evidence="6">Belongs to the DDI1 family.</text>
</comment>
<dbReference type="EC" id="3.4.23.-" evidence="2"/>
<dbReference type="EMBL" id="AAEY01000017">
    <property type="protein sequence ID" value="EAL21641.1"/>
    <property type="molecule type" value="Genomic_DNA"/>
</dbReference>
<dbReference type="RefSeq" id="XP_776288.1">
    <property type="nucleotide sequence ID" value="XM_771195.1"/>
</dbReference>
<dbReference type="SMR" id="P0CS15"/>
<dbReference type="EnsemblFungi" id="AAW42029">
    <property type="protein sequence ID" value="AAW42029"/>
    <property type="gene ID" value="CNC00460"/>
</dbReference>
<dbReference type="GeneID" id="4935345"/>
<dbReference type="KEGG" id="cnb:CNBC6770"/>
<dbReference type="VEuPathDB" id="FungiDB:CNBC6770"/>
<dbReference type="HOGENOM" id="CLU_020435_2_0_1"/>
<dbReference type="OrthoDB" id="5392at5206"/>
<dbReference type="GO" id="GO:0005737">
    <property type="term" value="C:cytoplasm"/>
    <property type="evidence" value="ECO:0007669"/>
    <property type="project" value="UniProtKB-SubCell"/>
</dbReference>
<dbReference type="GO" id="GO:0004190">
    <property type="term" value="F:aspartic-type endopeptidase activity"/>
    <property type="evidence" value="ECO:0007669"/>
    <property type="project" value="UniProtKB-KW"/>
</dbReference>
<dbReference type="GO" id="GO:0015031">
    <property type="term" value="P:protein transport"/>
    <property type="evidence" value="ECO:0007669"/>
    <property type="project" value="UniProtKB-KW"/>
</dbReference>
<dbReference type="GO" id="GO:0006508">
    <property type="term" value="P:proteolysis"/>
    <property type="evidence" value="ECO:0007669"/>
    <property type="project" value="UniProtKB-KW"/>
</dbReference>
<dbReference type="CDD" id="cd05479">
    <property type="entry name" value="RP_DDI"/>
    <property type="match status" value="1"/>
</dbReference>
<dbReference type="CDD" id="cd14310">
    <property type="entry name" value="UBA_cnDdi1_like"/>
    <property type="match status" value="1"/>
</dbReference>
<dbReference type="Gene3D" id="2.40.70.10">
    <property type="entry name" value="Acid Proteases"/>
    <property type="match status" value="1"/>
</dbReference>
<dbReference type="Gene3D" id="1.10.8.10">
    <property type="entry name" value="DNA helicase RuvA subunit, C-terminal domain"/>
    <property type="match status" value="1"/>
</dbReference>
<dbReference type="InterPro" id="IPR019103">
    <property type="entry name" value="Peptidase_aspartic_DDI1-type"/>
</dbReference>
<dbReference type="InterPro" id="IPR021109">
    <property type="entry name" value="Peptidase_aspartic_dom_sf"/>
</dbReference>
<dbReference type="InterPro" id="IPR015940">
    <property type="entry name" value="UBA"/>
</dbReference>
<dbReference type="InterPro" id="IPR009060">
    <property type="entry name" value="UBA-like_sf"/>
</dbReference>
<dbReference type="InterPro" id="IPR029071">
    <property type="entry name" value="Ubiquitin-like_domsf"/>
</dbReference>
<dbReference type="PANTHER" id="PTHR12917">
    <property type="entry name" value="ASPARTYL PROTEASE DDI-RELATED"/>
    <property type="match status" value="1"/>
</dbReference>
<dbReference type="PANTHER" id="PTHR12917:SF1">
    <property type="entry name" value="AT13091P"/>
    <property type="match status" value="1"/>
</dbReference>
<dbReference type="Pfam" id="PF09668">
    <property type="entry name" value="Asp_protease"/>
    <property type="match status" value="1"/>
</dbReference>
<dbReference type="Pfam" id="PF00627">
    <property type="entry name" value="UBA"/>
    <property type="match status" value="1"/>
</dbReference>
<dbReference type="SMART" id="SM00165">
    <property type="entry name" value="UBA"/>
    <property type="match status" value="1"/>
</dbReference>
<dbReference type="SUPFAM" id="SSF50630">
    <property type="entry name" value="Acid proteases"/>
    <property type="match status" value="1"/>
</dbReference>
<dbReference type="SUPFAM" id="SSF46934">
    <property type="entry name" value="UBA-like"/>
    <property type="match status" value="1"/>
</dbReference>
<dbReference type="SUPFAM" id="SSF54236">
    <property type="entry name" value="Ubiquitin-like"/>
    <property type="match status" value="1"/>
</dbReference>
<dbReference type="PROSITE" id="PS50030">
    <property type="entry name" value="UBA"/>
    <property type="match status" value="1"/>
</dbReference>
<accession>P0CS15</accession>
<accession>Q55V04</accession>
<accession>Q5KL78</accession>
<gene>
    <name type="primary">DDI1</name>
    <name type="ordered locus">CNBC6770</name>
</gene>
<keyword id="KW-0064">Aspartyl protease</keyword>
<keyword id="KW-0963">Cytoplasm</keyword>
<keyword id="KW-0378">Hydrolase</keyword>
<keyword id="KW-0645">Protease</keyword>
<keyword id="KW-0653">Protein transport</keyword>
<keyword id="KW-0813">Transport</keyword>
<name>DDI1_CRYNB</name>
<organism>
    <name type="scientific">Cryptococcus neoformans var. neoformans serotype D (strain B-3501A)</name>
    <name type="common">Filobasidiella neoformans</name>
    <dbReference type="NCBI Taxonomy" id="283643"/>
    <lineage>
        <taxon>Eukaryota</taxon>
        <taxon>Fungi</taxon>
        <taxon>Dikarya</taxon>
        <taxon>Basidiomycota</taxon>
        <taxon>Agaricomycotina</taxon>
        <taxon>Tremellomycetes</taxon>
        <taxon>Tremellales</taxon>
        <taxon>Cryptococcaceae</taxon>
        <taxon>Cryptococcus</taxon>
        <taxon>Cryptococcus neoformans species complex</taxon>
    </lineage>
</organism>
<evidence type="ECO:0000250" key="1"/>
<evidence type="ECO:0000250" key="2">
    <source>
        <dbReference type="UniProtKB" id="I7HUG0"/>
    </source>
</evidence>
<evidence type="ECO:0000250" key="3">
    <source>
        <dbReference type="UniProtKB" id="P40087"/>
    </source>
</evidence>
<evidence type="ECO:0000255" key="4">
    <source>
        <dbReference type="PROSITE-ProRule" id="PRU00212"/>
    </source>
</evidence>
<evidence type="ECO:0000256" key="5">
    <source>
        <dbReference type="SAM" id="MobiDB-lite"/>
    </source>
</evidence>
<evidence type="ECO:0000305" key="6"/>
<proteinExistence type="inferred from homology"/>